<organism>
    <name type="scientific">Bradyrhizobium diazoefficiens (strain JCM 10833 / BCRC 13528 / IAM 13628 / NBRC 14792 / USDA 110)</name>
    <dbReference type="NCBI Taxonomy" id="224911"/>
    <lineage>
        <taxon>Bacteria</taxon>
        <taxon>Pseudomonadati</taxon>
        <taxon>Pseudomonadota</taxon>
        <taxon>Alphaproteobacteria</taxon>
        <taxon>Hyphomicrobiales</taxon>
        <taxon>Nitrobacteraceae</taxon>
        <taxon>Bradyrhizobium</taxon>
    </lineage>
</organism>
<proteinExistence type="inferred from homology"/>
<dbReference type="EMBL" id="BA000040">
    <property type="protein sequence ID" value="BAC51103.1"/>
    <property type="status" value="ALT_INIT"/>
    <property type="molecule type" value="Genomic_DNA"/>
</dbReference>
<dbReference type="RefSeq" id="NP_772478.1">
    <property type="nucleotide sequence ID" value="NC_004463.1"/>
</dbReference>
<dbReference type="RefSeq" id="WP_028173283.1">
    <property type="nucleotide sequence ID" value="NC_004463.1"/>
</dbReference>
<dbReference type="SMR" id="Q89I01"/>
<dbReference type="FunCoup" id="Q89I01">
    <property type="interactions" value="66"/>
</dbReference>
<dbReference type="STRING" id="224911.AAV28_26725"/>
<dbReference type="EnsemblBacteria" id="BAC51103">
    <property type="protein sequence ID" value="BAC51103"/>
    <property type="gene ID" value="BAC51103"/>
</dbReference>
<dbReference type="GeneID" id="46492836"/>
<dbReference type="KEGG" id="bja:blr5838"/>
<dbReference type="PATRIC" id="fig|224911.44.peg.5784"/>
<dbReference type="eggNOG" id="COG1706">
    <property type="taxonomic scope" value="Bacteria"/>
</dbReference>
<dbReference type="HOGENOM" id="CLU_045235_1_0_5"/>
<dbReference type="InParanoid" id="Q89I01"/>
<dbReference type="OrthoDB" id="9786431at2"/>
<dbReference type="Proteomes" id="UP000002526">
    <property type="component" value="Chromosome"/>
</dbReference>
<dbReference type="GO" id="GO:0009428">
    <property type="term" value="C:bacterial-type flagellum basal body, distal rod, P ring"/>
    <property type="evidence" value="ECO:0000318"/>
    <property type="project" value="GO_Central"/>
</dbReference>
<dbReference type="GO" id="GO:0030288">
    <property type="term" value="C:outer membrane-bounded periplasmic space"/>
    <property type="evidence" value="ECO:0007669"/>
    <property type="project" value="InterPro"/>
</dbReference>
<dbReference type="GO" id="GO:0005198">
    <property type="term" value="F:structural molecule activity"/>
    <property type="evidence" value="ECO:0007669"/>
    <property type="project" value="InterPro"/>
</dbReference>
<dbReference type="GO" id="GO:0071973">
    <property type="term" value="P:bacterial-type flagellum-dependent cell motility"/>
    <property type="evidence" value="ECO:0000318"/>
    <property type="project" value="GO_Central"/>
</dbReference>
<dbReference type="HAMAP" id="MF_00416">
    <property type="entry name" value="FlgI"/>
    <property type="match status" value="1"/>
</dbReference>
<dbReference type="InterPro" id="IPR001782">
    <property type="entry name" value="Flag_FlgI"/>
</dbReference>
<dbReference type="NCBIfam" id="NF003676">
    <property type="entry name" value="PRK05303.1"/>
    <property type="match status" value="1"/>
</dbReference>
<dbReference type="PANTHER" id="PTHR30381">
    <property type="entry name" value="FLAGELLAR P-RING PERIPLASMIC PROTEIN FLGI"/>
    <property type="match status" value="1"/>
</dbReference>
<dbReference type="PANTHER" id="PTHR30381:SF0">
    <property type="entry name" value="FLAGELLAR P-RING PROTEIN"/>
    <property type="match status" value="1"/>
</dbReference>
<dbReference type="Pfam" id="PF02119">
    <property type="entry name" value="FlgI"/>
    <property type="match status" value="1"/>
</dbReference>
<dbReference type="PRINTS" id="PR01010">
    <property type="entry name" value="FLGPRINGFLGI"/>
</dbReference>
<gene>
    <name evidence="1" type="primary">flgI1</name>
    <name type="ordered locus">blr5838</name>
</gene>
<keyword id="KW-0975">Bacterial flagellum</keyword>
<keyword id="KW-0574">Periplasm</keyword>
<keyword id="KW-1185">Reference proteome</keyword>
<keyword id="KW-0732">Signal</keyword>
<comment type="function">
    <text evidence="1">Assembles around the rod to form the L-ring and probably protects the motor/basal body from shearing forces during rotation.</text>
</comment>
<comment type="subunit">
    <text evidence="1">The basal body constitutes a major portion of the flagellar organelle and consists of four rings (L,P,S, and M) mounted on a central rod.</text>
</comment>
<comment type="subcellular location">
    <subcellularLocation>
        <location evidence="1">Periplasm</location>
    </subcellularLocation>
    <subcellularLocation>
        <location evidence="1">Bacterial flagellum basal body</location>
    </subcellularLocation>
</comment>
<comment type="similarity">
    <text evidence="1">Belongs to the FlgI family.</text>
</comment>
<comment type="sequence caution" evidence="2">
    <conflict type="erroneous initiation">
        <sequence resource="EMBL-CDS" id="BAC51103"/>
    </conflict>
</comment>
<feature type="signal peptide" evidence="1">
    <location>
        <begin position="1"/>
        <end position="29"/>
    </location>
</feature>
<feature type="chain" id="PRO_0000041787" description="Flagellar P-ring protein 1">
    <location>
        <begin position="30"/>
        <end position="374"/>
    </location>
</feature>
<sequence>MPGVRWVRIVGVACAALSALALSVTSASATSRIKDLANIEGVRQNQLIGYGLVVGLNGTGDTLNNIPFTKQSLQAMLERMGVNIRGATIRTGNVAAVMVTGNLPAFATQGTRMDVTVSALGDAKNLQGGTLLVTPLLGADGNVYAVAQGSLAISGFQAEGEAAKIVRGVPTVGRIANGAIIEREIEFALNRLPNVRLALRNADFTTAKRIAAAVNDYLGVKTAEPIDPSTVQLSIPPEFKGNVVAFLTEIEQLQVDPDLAAKIVIDERSGIIVMGRDVRVATVAVAQGNLTVTISESPQVSQPNPLSRGRTVVAPRSSVSVTEDGRKLALVKDGVSLQQLVDGLNGLGIGPRDMISILQAIKAAGAIEADIEVM</sequence>
<evidence type="ECO:0000255" key="1">
    <source>
        <dbReference type="HAMAP-Rule" id="MF_00416"/>
    </source>
</evidence>
<evidence type="ECO:0000305" key="2"/>
<reference key="1">
    <citation type="journal article" date="2002" name="DNA Res.">
        <title>Complete genomic sequence of nitrogen-fixing symbiotic bacterium Bradyrhizobium japonicum USDA110.</title>
        <authorList>
            <person name="Kaneko T."/>
            <person name="Nakamura Y."/>
            <person name="Sato S."/>
            <person name="Minamisawa K."/>
            <person name="Uchiumi T."/>
            <person name="Sasamoto S."/>
            <person name="Watanabe A."/>
            <person name="Idesawa K."/>
            <person name="Iriguchi M."/>
            <person name="Kawashima K."/>
            <person name="Kohara M."/>
            <person name="Matsumoto M."/>
            <person name="Shimpo S."/>
            <person name="Tsuruoka H."/>
            <person name="Wada T."/>
            <person name="Yamada M."/>
            <person name="Tabata S."/>
        </authorList>
    </citation>
    <scope>NUCLEOTIDE SEQUENCE [LARGE SCALE GENOMIC DNA]</scope>
    <source>
        <strain>JCM 10833 / BCRC 13528 / IAM 13628 / NBRC 14792 / USDA 110</strain>
    </source>
</reference>
<name>FLGI1_BRADU</name>
<protein>
    <recommendedName>
        <fullName evidence="1">Flagellar P-ring protein 1</fullName>
    </recommendedName>
    <alternativeName>
        <fullName evidence="1">Basal body P-ring protein 1</fullName>
    </alternativeName>
</protein>
<accession>Q89I01</accession>